<organism>
    <name type="scientific">Synechococcus elongatus (strain ATCC 33912 / PCC 7942 / FACHB-805)</name>
    <name type="common">Anacystis nidulans R2</name>
    <dbReference type="NCBI Taxonomy" id="1140"/>
    <lineage>
        <taxon>Bacteria</taxon>
        <taxon>Bacillati</taxon>
        <taxon>Cyanobacteriota</taxon>
        <taxon>Cyanophyceae</taxon>
        <taxon>Synechococcales</taxon>
        <taxon>Synechococcaceae</taxon>
        <taxon>Synechococcus</taxon>
    </lineage>
</organism>
<dbReference type="EMBL" id="AY120853">
    <property type="protein sequence ID" value="AAM82726.1"/>
    <property type="molecule type" value="Genomic_DNA"/>
</dbReference>
<dbReference type="EMBL" id="CP000100">
    <property type="protein sequence ID" value="ABB57208.1"/>
    <property type="molecule type" value="Genomic_DNA"/>
</dbReference>
<dbReference type="RefSeq" id="WP_011377902.1">
    <property type="nucleotide sequence ID" value="NZ_JACJTX010000003.1"/>
</dbReference>
<dbReference type="SMR" id="Q31P11"/>
<dbReference type="STRING" id="1140.Synpcc7942_1178"/>
<dbReference type="PaxDb" id="1140-Synpcc7942_1178"/>
<dbReference type="KEGG" id="syf:Synpcc7942_1178"/>
<dbReference type="eggNOG" id="COG4447">
    <property type="taxonomic scope" value="Bacteria"/>
</dbReference>
<dbReference type="HOGENOM" id="CLU_057027_0_0_3"/>
<dbReference type="OrthoDB" id="9813892at2"/>
<dbReference type="BioCyc" id="SYNEL:SYNPCC7942_1178-MONOMER"/>
<dbReference type="Proteomes" id="UP000889800">
    <property type="component" value="Chromosome"/>
</dbReference>
<dbReference type="GO" id="GO:0009523">
    <property type="term" value="C:photosystem II"/>
    <property type="evidence" value="ECO:0007669"/>
    <property type="project" value="UniProtKB-KW"/>
</dbReference>
<dbReference type="GO" id="GO:0031979">
    <property type="term" value="C:plasma membrane-derived thylakoid lumen"/>
    <property type="evidence" value="ECO:0007669"/>
    <property type="project" value="UniProtKB-SubCell"/>
</dbReference>
<dbReference type="GO" id="GO:0015979">
    <property type="term" value="P:photosynthesis"/>
    <property type="evidence" value="ECO:0007669"/>
    <property type="project" value="UniProtKB-KW"/>
</dbReference>
<dbReference type="CDD" id="cd15482">
    <property type="entry name" value="Sialidase_non-viral"/>
    <property type="match status" value="1"/>
</dbReference>
<dbReference type="Gene3D" id="2.130.10.10">
    <property type="entry name" value="YVTN repeat-like/Quinoprotein amine dehydrogenase"/>
    <property type="match status" value="1"/>
</dbReference>
<dbReference type="HAMAP" id="MF_01348">
    <property type="entry name" value="Ycf48"/>
    <property type="match status" value="1"/>
</dbReference>
<dbReference type="InterPro" id="IPR028203">
    <property type="entry name" value="PSII_CF48-like_dom"/>
</dbReference>
<dbReference type="InterPro" id="IPR015943">
    <property type="entry name" value="WD40/YVTN_repeat-like_dom_sf"/>
</dbReference>
<dbReference type="InterPro" id="IPR016705">
    <property type="entry name" value="Ycf48/Hcf136"/>
</dbReference>
<dbReference type="NCBIfam" id="NF010237">
    <property type="entry name" value="PRK13684.1"/>
    <property type="match status" value="1"/>
</dbReference>
<dbReference type="PANTHER" id="PTHR47199">
    <property type="entry name" value="PHOTOSYSTEM II STABILITY/ASSEMBLY FACTOR HCF136, CHLOROPLASTIC"/>
    <property type="match status" value="1"/>
</dbReference>
<dbReference type="PANTHER" id="PTHR47199:SF2">
    <property type="entry name" value="PHOTOSYSTEM II STABILITY_ASSEMBLY FACTOR HCF136, CHLOROPLASTIC"/>
    <property type="match status" value="1"/>
</dbReference>
<dbReference type="Pfam" id="PF14870">
    <property type="entry name" value="PSII_BNR"/>
    <property type="match status" value="1"/>
</dbReference>
<dbReference type="PIRSF" id="PIRSF017875">
    <property type="entry name" value="PSII_HCF136"/>
    <property type="match status" value="1"/>
</dbReference>
<dbReference type="SUPFAM" id="SSF110296">
    <property type="entry name" value="Oligoxyloglucan reducing end-specific cellobiohydrolase"/>
    <property type="match status" value="1"/>
</dbReference>
<protein>
    <recommendedName>
        <fullName evidence="1">Photosystem II assembly protein Ycf48</fullName>
    </recommendedName>
</protein>
<reference key="1">
    <citation type="submission" date="2002-06" db="EMBL/GenBank/DDBJ databases">
        <title>Synechococcus elongatus PCC7942 cosmid 7G3.</title>
        <authorList>
            <person name="Holtman C.K."/>
            <person name="Sandoval P."/>
            <person name="Chen Y."/>
            <person name="Socias T."/>
            <person name="Mohler B.J."/>
            <person name="McMurtry S."/>
            <person name="Gonzalez A."/>
            <person name="Salinas I."/>
            <person name="Golden S.S."/>
            <person name="Youderian P."/>
        </authorList>
    </citation>
    <scope>NUCLEOTIDE SEQUENCE [LARGE SCALE GENOMIC DNA]</scope>
</reference>
<reference key="2">
    <citation type="submission" date="2005-08" db="EMBL/GenBank/DDBJ databases">
        <title>Complete sequence of chromosome 1 of Synechococcus elongatus PCC 7942.</title>
        <authorList>
            <consortium name="US DOE Joint Genome Institute"/>
            <person name="Copeland A."/>
            <person name="Lucas S."/>
            <person name="Lapidus A."/>
            <person name="Barry K."/>
            <person name="Detter J.C."/>
            <person name="Glavina T."/>
            <person name="Hammon N."/>
            <person name="Israni S."/>
            <person name="Pitluck S."/>
            <person name="Schmutz J."/>
            <person name="Larimer F."/>
            <person name="Land M."/>
            <person name="Kyrpides N."/>
            <person name="Lykidis A."/>
            <person name="Golden S."/>
            <person name="Richardson P."/>
        </authorList>
    </citation>
    <scope>NUCLEOTIDE SEQUENCE [LARGE SCALE GENOMIC DNA]</scope>
    <source>
        <strain>ATCC 33912 / PCC 7942 / FACHB-805</strain>
    </source>
</reference>
<keyword id="KW-0602">Photosynthesis</keyword>
<keyword id="KW-0604">Photosystem II</keyword>
<keyword id="KW-1185">Reference proteome</keyword>
<keyword id="KW-0732">Signal</keyword>
<keyword id="KW-0793">Thylakoid</keyword>
<gene>
    <name evidence="1" type="primary">ycf48</name>
    <name type="ordered locus">Synpcc7942_1178</name>
    <name type="ORF">SEE0051</name>
</gene>
<proteinExistence type="inferred from homology"/>
<accession>Q31P11</accession>
<accession>Q8KPP4</accession>
<name>YCF48_SYNE7</name>
<comment type="function">
    <text evidence="1">A factor required for optimal assembly of photosystem II (PSII), acting in the early stages of PSII assembly. Also plays a role in replacement of photodamaged D1 (psbA). Assists YidC in synthesis of chlorophyll-binding proteins.</text>
</comment>
<comment type="subunit">
    <text evidence="1">Part of early PSII assembly complexes which includes D1 (psbA) and PsbI; not found in mature PSII. Binds to the lumenal side of PSII complexes. Interacts with YidC.</text>
</comment>
<comment type="subcellular location">
    <subcellularLocation>
        <location evidence="1">Cellular thylakoid lumen</location>
    </subcellularLocation>
    <text evidence="1">Associated with a PSII precusor complex on the lumenal side of the thylakoid membrane.</text>
</comment>
<comment type="domain">
    <text evidence="1">A 7-bladed beta-propeller torus, about 55 by 55 Angstroms, with a depth of about 25 Angstroms and a central pore.</text>
</comment>
<comment type="similarity">
    <text evidence="1">Belongs to the Ycf48 family.</text>
</comment>
<evidence type="ECO:0000255" key="1">
    <source>
        <dbReference type="HAMAP-Rule" id="MF_01348"/>
    </source>
</evidence>
<evidence type="ECO:0000305" key="2"/>
<feature type="signal peptide" evidence="1">
    <location>
        <begin position="1"/>
        <end position="31"/>
    </location>
</feature>
<feature type="chain" id="PRO_0000239687" description="Photosystem II assembly protein Ycf48" evidence="1">
    <location>
        <begin position="32"/>
        <end position="349"/>
    </location>
</feature>
<feature type="sequence conflict" description="In Ref. 1; AAM82726." evidence="2" ref="1">
    <original>TLDGGQSW</original>
    <variation>DSGWWTKL</variation>
    <location>
        <begin position="77"/>
        <end position="84"/>
    </location>
</feature>
<feature type="sequence conflict" description="In Ref. 1; AAM82726." evidence="2" ref="1">
    <original>H</original>
    <variation>A</variation>
    <location>
        <position position="214"/>
    </location>
</feature>
<feature type="sequence conflict" description="In Ref. 1; AAM82726." evidence="2" ref="1">
    <original>NAGWGFLDLAYRSKQEIWLSGGSGTLLVSEDGGEHWQRDRVIA</original>
    <variation>TQAGASLIWPTAPSRNLAVGWQWHPVGERGWRGTTGTRSRDC</variation>
    <location>
        <begin position="272"/>
        <end position="314"/>
    </location>
</feature>
<sequence>MSSLLSRSRVGWLLGFLLLPLLFWLPAPAWAATEVAPSTSPWQVIDLGTEKTILDIAFTSNKQHGWLVGTDLALYETLDGGQSWSERALDLDETYRLNSISFKGDEGWVVGQPSLMLHTTDGGKNWLRIPLSEKLPGSPLLVTALGKGEAEMATDVAAIYRSRDGGKSWQAQVPDAAGVARSVSRSRDGRYLAVSARGNFYSTWKPGDTTWTPHQRTSSRRLQLMGFGPDDRTWLIARGGRLQFSKTSQIDNWEEMLEESDAWGTAIEPERNAGWGFLDLAYRSKQEIWLSGGSGTLLVSEDGGEHWQRDRVIAKLPSNLYTIKFFAPKQGFVLGQRGLLLRYAPEAAA</sequence>